<name>DTD_BURCJ</name>
<organism>
    <name type="scientific">Burkholderia cenocepacia (strain ATCC BAA-245 / DSM 16553 / LMG 16656 / NCTC 13227 / J2315 / CF5610)</name>
    <name type="common">Burkholderia cepacia (strain J2315)</name>
    <dbReference type="NCBI Taxonomy" id="216591"/>
    <lineage>
        <taxon>Bacteria</taxon>
        <taxon>Pseudomonadati</taxon>
        <taxon>Pseudomonadota</taxon>
        <taxon>Betaproteobacteria</taxon>
        <taxon>Burkholderiales</taxon>
        <taxon>Burkholderiaceae</taxon>
        <taxon>Burkholderia</taxon>
        <taxon>Burkholderia cepacia complex</taxon>
    </lineage>
</organism>
<sequence>MIALIQRVTRADVRVGGRTTGEIGAGLLALVCAERGDTEAAADKLLAKLLGYRVFSDAAGKMNLPVSNIDGEGRAGGLLLVSQFTLAADTNSGLRPSFTPAAPPDEGARLFDYFVAAARARHPVVETGEFGADMQVSLVNDGPVTFWLQVRP</sequence>
<evidence type="ECO:0000255" key="1">
    <source>
        <dbReference type="HAMAP-Rule" id="MF_00518"/>
    </source>
</evidence>
<protein>
    <recommendedName>
        <fullName evidence="1">D-aminoacyl-tRNA deacylase</fullName>
        <shortName evidence="1">DTD</shortName>
        <ecNumber evidence="1">3.1.1.96</ecNumber>
    </recommendedName>
    <alternativeName>
        <fullName evidence="1">Gly-tRNA(Ala) deacylase</fullName>
    </alternativeName>
</protein>
<accession>B4EET1</accession>
<keyword id="KW-0963">Cytoplasm</keyword>
<keyword id="KW-0378">Hydrolase</keyword>
<keyword id="KW-0694">RNA-binding</keyword>
<keyword id="KW-0820">tRNA-binding</keyword>
<proteinExistence type="inferred from homology"/>
<gene>
    <name evidence="1" type="primary">dtd</name>
    <name type="ordered locus">BceJ2315_32820</name>
    <name type="ORF">BCAL3343</name>
</gene>
<comment type="function">
    <text evidence="1">An aminoacyl-tRNA editing enzyme that deacylates mischarged D-aminoacyl-tRNAs. Also deacylates mischarged glycyl-tRNA(Ala), protecting cells against glycine mischarging by AlaRS. Acts via tRNA-based rather than protein-based catalysis; rejects L-amino acids rather than detecting D-amino acids in the active site. By recycling D-aminoacyl-tRNA to D-amino acids and free tRNA molecules, this enzyme counteracts the toxicity associated with the formation of D-aminoacyl-tRNA entities in vivo and helps enforce protein L-homochirality.</text>
</comment>
<comment type="catalytic activity">
    <reaction evidence="1">
        <text>glycyl-tRNA(Ala) + H2O = tRNA(Ala) + glycine + H(+)</text>
        <dbReference type="Rhea" id="RHEA:53744"/>
        <dbReference type="Rhea" id="RHEA-COMP:9657"/>
        <dbReference type="Rhea" id="RHEA-COMP:13640"/>
        <dbReference type="ChEBI" id="CHEBI:15377"/>
        <dbReference type="ChEBI" id="CHEBI:15378"/>
        <dbReference type="ChEBI" id="CHEBI:57305"/>
        <dbReference type="ChEBI" id="CHEBI:78442"/>
        <dbReference type="ChEBI" id="CHEBI:78522"/>
        <dbReference type="EC" id="3.1.1.96"/>
    </reaction>
</comment>
<comment type="catalytic activity">
    <reaction evidence="1">
        <text>a D-aminoacyl-tRNA + H2O = a tRNA + a D-alpha-amino acid + H(+)</text>
        <dbReference type="Rhea" id="RHEA:13953"/>
        <dbReference type="Rhea" id="RHEA-COMP:10123"/>
        <dbReference type="Rhea" id="RHEA-COMP:10124"/>
        <dbReference type="ChEBI" id="CHEBI:15377"/>
        <dbReference type="ChEBI" id="CHEBI:15378"/>
        <dbReference type="ChEBI" id="CHEBI:59871"/>
        <dbReference type="ChEBI" id="CHEBI:78442"/>
        <dbReference type="ChEBI" id="CHEBI:79333"/>
        <dbReference type="EC" id="3.1.1.96"/>
    </reaction>
</comment>
<comment type="subunit">
    <text evidence="1">Homodimer.</text>
</comment>
<comment type="subcellular location">
    <subcellularLocation>
        <location evidence="1">Cytoplasm</location>
    </subcellularLocation>
</comment>
<comment type="domain">
    <text evidence="1">A Gly-cisPro motif from one monomer fits into the active site of the other monomer to allow specific chiral rejection of L-amino acids.</text>
</comment>
<comment type="similarity">
    <text evidence="1">Belongs to the DTD family.</text>
</comment>
<reference key="1">
    <citation type="journal article" date="2009" name="J. Bacteriol.">
        <title>The genome of Burkholderia cenocepacia J2315, an epidemic pathogen of cystic fibrosis patients.</title>
        <authorList>
            <person name="Holden M.T."/>
            <person name="Seth-Smith H.M."/>
            <person name="Crossman L.C."/>
            <person name="Sebaihia M."/>
            <person name="Bentley S.D."/>
            <person name="Cerdeno-Tarraga A.M."/>
            <person name="Thomson N.R."/>
            <person name="Bason N."/>
            <person name="Quail M.A."/>
            <person name="Sharp S."/>
            <person name="Cherevach I."/>
            <person name="Churcher C."/>
            <person name="Goodhead I."/>
            <person name="Hauser H."/>
            <person name="Holroyd N."/>
            <person name="Mungall K."/>
            <person name="Scott P."/>
            <person name="Walker D."/>
            <person name="White B."/>
            <person name="Rose H."/>
            <person name="Iversen P."/>
            <person name="Mil-Homens D."/>
            <person name="Rocha E.P."/>
            <person name="Fialho A.M."/>
            <person name="Baldwin A."/>
            <person name="Dowson C."/>
            <person name="Barrell B.G."/>
            <person name="Govan J.R."/>
            <person name="Vandamme P."/>
            <person name="Hart C.A."/>
            <person name="Mahenthiralingam E."/>
            <person name="Parkhill J."/>
        </authorList>
    </citation>
    <scope>NUCLEOTIDE SEQUENCE [LARGE SCALE GENOMIC DNA]</scope>
    <source>
        <strain>ATCC BAA-245 / DSM 16553 / LMG 16656 / NCTC 13227 / J2315 / CF5610</strain>
    </source>
</reference>
<feature type="chain" id="PRO_1000127499" description="D-aminoacyl-tRNA deacylase">
    <location>
        <begin position="1"/>
        <end position="152"/>
    </location>
</feature>
<feature type="short sequence motif" description="Gly-cisPro motif, important for rejection of L-amino acids" evidence="1">
    <location>
        <begin position="142"/>
        <end position="143"/>
    </location>
</feature>
<dbReference type="EC" id="3.1.1.96" evidence="1"/>
<dbReference type="EMBL" id="AM747720">
    <property type="protein sequence ID" value="CAR53666.1"/>
    <property type="molecule type" value="Genomic_DNA"/>
</dbReference>
<dbReference type="RefSeq" id="WP_006483442.1">
    <property type="nucleotide sequence ID" value="NC_011000.1"/>
</dbReference>
<dbReference type="SMR" id="B4EET1"/>
<dbReference type="GeneID" id="56557120"/>
<dbReference type="KEGG" id="bcj:BCAL3343"/>
<dbReference type="eggNOG" id="COG1490">
    <property type="taxonomic scope" value="Bacteria"/>
</dbReference>
<dbReference type="HOGENOM" id="CLU_076901_1_1_4"/>
<dbReference type="BioCyc" id="BCEN216591:G1G1V-3719-MONOMER"/>
<dbReference type="Proteomes" id="UP000001035">
    <property type="component" value="Chromosome 1"/>
</dbReference>
<dbReference type="GO" id="GO:0005737">
    <property type="term" value="C:cytoplasm"/>
    <property type="evidence" value="ECO:0007669"/>
    <property type="project" value="UniProtKB-SubCell"/>
</dbReference>
<dbReference type="GO" id="GO:0051500">
    <property type="term" value="F:D-tyrosyl-tRNA(Tyr) deacylase activity"/>
    <property type="evidence" value="ECO:0007669"/>
    <property type="project" value="TreeGrafter"/>
</dbReference>
<dbReference type="GO" id="GO:0106026">
    <property type="term" value="F:Gly-tRNA(Ala) deacylase activity"/>
    <property type="evidence" value="ECO:0007669"/>
    <property type="project" value="UniProtKB-UniRule"/>
</dbReference>
<dbReference type="GO" id="GO:0043908">
    <property type="term" value="F:Ser(Gly)-tRNA(Ala) hydrolase activity"/>
    <property type="evidence" value="ECO:0007669"/>
    <property type="project" value="UniProtKB-UniRule"/>
</dbReference>
<dbReference type="GO" id="GO:0000049">
    <property type="term" value="F:tRNA binding"/>
    <property type="evidence" value="ECO:0007669"/>
    <property type="project" value="UniProtKB-UniRule"/>
</dbReference>
<dbReference type="GO" id="GO:0019478">
    <property type="term" value="P:D-amino acid catabolic process"/>
    <property type="evidence" value="ECO:0007669"/>
    <property type="project" value="UniProtKB-UniRule"/>
</dbReference>
<dbReference type="CDD" id="cd00563">
    <property type="entry name" value="Dtyr_deacylase"/>
    <property type="match status" value="1"/>
</dbReference>
<dbReference type="FunFam" id="3.50.80.10:FF:000001">
    <property type="entry name" value="D-aminoacyl-tRNA deacylase"/>
    <property type="match status" value="1"/>
</dbReference>
<dbReference type="Gene3D" id="3.50.80.10">
    <property type="entry name" value="D-tyrosyl-tRNA(Tyr) deacylase"/>
    <property type="match status" value="1"/>
</dbReference>
<dbReference type="HAMAP" id="MF_00518">
    <property type="entry name" value="Deacylase_Dtd"/>
    <property type="match status" value="1"/>
</dbReference>
<dbReference type="InterPro" id="IPR003732">
    <property type="entry name" value="Daa-tRNA_deacyls_DTD"/>
</dbReference>
<dbReference type="InterPro" id="IPR023509">
    <property type="entry name" value="DTD-like_sf"/>
</dbReference>
<dbReference type="NCBIfam" id="TIGR00256">
    <property type="entry name" value="D-aminoacyl-tRNA deacylase"/>
    <property type="match status" value="1"/>
</dbReference>
<dbReference type="PANTHER" id="PTHR10472:SF5">
    <property type="entry name" value="D-AMINOACYL-TRNA DEACYLASE 1"/>
    <property type="match status" value="1"/>
</dbReference>
<dbReference type="PANTHER" id="PTHR10472">
    <property type="entry name" value="D-TYROSYL-TRNA TYR DEACYLASE"/>
    <property type="match status" value="1"/>
</dbReference>
<dbReference type="Pfam" id="PF02580">
    <property type="entry name" value="Tyr_Deacylase"/>
    <property type="match status" value="1"/>
</dbReference>
<dbReference type="SUPFAM" id="SSF69500">
    <property type="entry name" value="DTD-like"/>
    <property type="match status" value="1"/>
</dbReference>